<comment type="function">
    <text evidence="1">Activates acetoacetate to acetoacetyl-CoA.</text>
</comment>
<comment type="catalytic activity">
    <reaction>
        <text>acetoacetate + ATP + CoA = acetoacetyl-CoA + AMP + diphosphate</text>
        <dbReference type="Rhea" id="RHEA:16117"/>
        <dbReference type="ChEBI" id="CHEBI:13705"/>
        <dbReference type="ChEBI" id="CHEBI:30616"/>
        <dbReference type="ChEBI" id="CHEBI:33019"/>
        <dbReference type="ChEBI" id="CHEBI:57286"/>
        <dbReference type="ChEBI" id="CHEBI:57287"/>
        <dbReference type="ChEBI" id="CHEBI:456215"/>
        <dbReference type="EC" id="6.2.1.16"/>
    </reaction>
</comment>
<comment type="subcellular location">
    <subcellularLocation>
        <location evidence="1">Cytoplasm</location>
        <location evidence="1">Cytosol</location>
    </subcellularLocation>
</comment>
<comment type="similarity">
    <text evidence="2">Belongs to the ATP-dependent AMP-binding enzyme family.</text>
</comment>
<organism>
    <name type="scientific">Xenopus tropicalis</name>
    <name type="common">Western clawed frog</name>
    <name type="synonym">Silurana tropicalis</name>
    <dbReference type="NCBI Taxonomy" id="8364"/>
    <lineage>
        <taxon>Eukaryota</taxon>
        <taxon>Metazoa</taxon>
        <taxon>Chordata</taxon>
        <taxon>Craniata</taxon>
        <taxon>Vertebrata</taxon>
        <taxon>Euteleostomi</taxon>
        <taxon>Amphibia</taxon>
        <taxon>Batrachia</taxon>
        <taxon>Anura</taxon>
        <taxon>Pipoidea</taxon>
        <taxon>Pipidae</taxon>
        <taxon>Xenopodinae</taxon>
        <taxon>Xenopus</taxon>
        <taxon>Silurana</taxon>
    </lineage>
</organism>
<gene>
    <name type="primary">aacs</name>
    <name type="ORF">TEgg036g05.1</name>
</gene>
<reference key="1">
    <citation type="submission" date="2006-10" db="EMBL/GenBank/DDBJ databases">
        <authorList>
            <consortium name="Sanger Xenopus tropicalis EST/cDNA project"/>
        </authorList>
    </citation>
    <scope>NUCLEOTIDE SEQUENCE [LARGE SCALE MRNA]</scope>
    <source>
        <tissue>Egg</tissue>
    </source>
</reference>
<dbReference type="EC" id="6.2.1.16"/>
<dbReference type="EMBL" id="CR942772">
    <property type="protein sequence ID" value="CAJ81897.1"/>
    <property type="molecule type" value="mRNA"/>
</dbReference>
<dbReference type="RefSeq" id="NP_001039244.1">
    <property type="nucleotide sequence ID" value="NM_001045779.1"/>
</dbReference>
<dbReference type="SMR" id="Q28BL6"/>
<dbReference type="FunCoup" id="Q28BL6">
    <property type="interactions" value="468"/>
</dbReference>
<dbReference type="STRING" id="8364.ENSXETP00000030308"/>
<dbReference type="PaxDb" id="8364-ENSXETP00000060617"/>
<dbReference type="GeneID" id="734109"/>
<dbReference type="KEGG" id="xtr:734109"/>
<dbReference type="AGR" id="Xenbase:XB-GENE-490085"/>
<dbReference type="CTD" id="65985"/>
<dbReference type="Xenbase" id="XB-GENE-490085">
    <property type="gene designation" value="aacs"/>
</dbReference>
<dbReference type="eggNOG" id="KOG1175">
    <property type="taxonomic scope" value="Eukaryota"/>
</dbReference>
<dbReference type="InParanoid" id="Q28BL6"/>
<dbReference type="OMA" id="MPNTWQT"/>
<dbReference type="OrthoDB" id="10253869at2759"/>
<dbReference type="Reactome" id="R-XTR-77111">
    <property type="pathway name" value="Synthesis of Ketone Bodies"/>
</dbReference>
<dbReference type="Proteomes" id="UP000008143">
    <property type="component" value="Chromosome 1"/>
</dbReference>
<dbReference type="GO" id="GO:0005829">
    <property type="term" value="C:cytosol"/>
    <property type="evidence" value="ECO:0007669"/>
    <property type="project" value="UniProtKB-SubCell"/>
</dbReference>
<dbReference type="GO" id="GO:0030729">
    <property type="term" value="F:acetoacetate-CoA ligase activity"/>
    <property type="evidence" value="ECO:0007669"/>
    <property type="project" value="UniProtKB-EC"/>
</dbReference>
<dbReference type="GO" id="GO:0005524">
    <property type="term" value="F:ATP binding"/>
    <property type="evidence" value="ECO:0007669"/>
    <property type="project" value="UniProtKB-KW"/>
</dbReference>
<dbReference type="GO" id="GO:0006631">
    <property type="term" value="P:fatty acid metabolic process"/>
    <property type="evidence" value="ECO:0007669"/>
    <property type="project" value="UniProtKB-KW"/>
</dbReference>
<dbReference type="CDD" id="cd05943">
    <property type="entry name" value="AACS"/>
    <property type="match status" value="1"/>
</dbReference>
<dbReference type="FunFam" id="3.30.300.30:FF:000037">
    <property type="entry name" value="acetoacetyl-CoA synthetase"/>
    <property type="match status" value="1"/>
</dbReference>
<dbReference type="Gene3D" id="3.30.300.30">
    <property type="match status" value="1"/>
</dbReference>
<dbReference type="Gene3D" id="3.40.50.12780">
    <property type="entry name" value="N-terminal domain of ligase-like"/>
    <property type="match status" value="1"/>
</dbReference>
<dbReference type="InterPro" id="IPR005914">
    <property type="entry name" value="Acac_CoA_synth"/>
</dbReference>
<dbReference type="InterPro" id="IPR032387">
    <property type="entry name" value="ACAS_N"/>
</dbReference>
<dbReference type="InterPro" id="IPR045851">
    <property type="entry name" value="AMP-bd_C_sf"/>
</dbReference>
<dbReference type="InterPro" id="IPR020845">
    <property type="entry name" value="AMP-binding_CS"/>
</dbReference>
<dbReference type="InterPro" id="IPR000873">
    <property type="entry name" value="AMP-dep_synth/lig_dom"/>
</dbReference>
<dbReference type="InterPro" id="IPR042099">
    <property type="entry name" value="ANL_N_sf"/>
</dbReference>
<dbReference type="NCBIfam" id="TIGR01217">
    <property type="entry name" value="ac_ac_CoA_syn"/>
    <property type="match status" value="1"/>
</dbReference>
<dbReference type="NCBIfam" id="NF002937">
    <property type="entry name" value="PRK03584.1"/>
    <property type="match status" value="1"/>
</dbReference>
<dbReference type="PANTHER" id="PTHR42921">
    <property type="entry name" value="ACETOACETYL-COA SYNTHETASE"/>
    <property type="match status" value="1"/>
</dbReference>
<dbReference type="PANTHER" id="PTHR42921:SF1">
    <property type="entry name" value="ACETOACETYL-COA SYNTHETASE"/>
    <property type="match status" value="1"/>
</dbReference>
<dbReference type="Pfam" id="PF16177">
    <property type="entry name" value="ACAS_N"/>
    <property type="match status" value="1"/>
</dbReference>
<dbReference type="Pfam" id="PF00501">
    <property type="entry name" value="AMP-binding"/>
    <property type="match status" value="1"/>
</dbReference>
<dbReference type="SUPFAM" id="SSF56801">
    <property type="entry name" value="Acetyl-CoA synthetase-like"/>
    <property type="match status" value="1"/>
</dbReference>
<dbReference type="PROSITE" id="PS00455">
    <property type="entry name" value="AMP_BINDING"/>
    <property type="match status" value="1"/>
</dbReference>
<keyword id="KW-0067">ATP-binding</keyword>
<keyword id="KW-0963">Cytoplasm</keyword>
<keyword id="KW-0276">Fatty acid metabolism</keyword>
<keyword id="KW-0436">Ligase</keyword>
<keyword id="KW-0443">Lipid metabolism</keyword>
<keyword id="KW-0547">Nucleotide-binding</keyword>
<keyword id="KW-1185">Reference proteome</keyword>
<protein>
    <recommendedName>
        <fullName>Acetoacetyl-CoA synthetase</fullName>
        <ecNumber>6.2.1.16</ecNumber>
    </recommendedName>
</protein>
<proteinExistence type="evidence at transcript level"/>
<sequence>MSDKGELMEEIMEAKVMWYPDSKKITQMDQFRNRVNRNLGLRLANYNELYQWSVEFYPEFWAEFWDFSGIVYSKTYDEVIDRSKGIADVPEWFKGSRLNYAENLLKHKENDKIALYSAREGKENIEKVTFAELRRDVALFAAAMRKMGIKTGDRVAGYLPNCIQTVEAMLAAASIGAIWSATSPDFGVNGVLDRFSQIQPKLILSVESVIYNGKEHCHLEKLQHVVKGLPDLKKVVVIPYVLPKEKIDISKIPNSMFLDEFLATGKVGDQSPQLEFEQLPFNHPLYIMYSSGTTGAPKCMVHSAGGTLIKHLTEHILHGSTTSSDVIMYYTTAGWMMWNWLITAVATGASLVLYDGSPLVPSLNVLWDLVDRLGITILGTGAKWLAVLEDKGLKPCNTHSLQTLHTILSTGSPLKPQSYEYVYKHIKSNVLLGSVSGGTDIIACFMGQNVSVPVYKGEIQARHLGMAIEAWNEEGEAVLGESGELVCLKPLPSQPTHFWNDENGSKYQKAYFAKFPGVWAHGDYCKINPKTGGIVMLGRSDGTLNPNGVRFGSSEIYNIVEAFVEVSDSLCVPQYNKDGDERVILFLKMADKFEFSKELLKRIKDAIRVALSARHVPALILETKDIPYTISGKKVEVAVKQVIAGKEVPHRGAFSNPQSLDLYRNIPELQNF</sequence>
<feature type="chain" id="PRO_0000315790" description="Acetoacetyl-CoA synthetase">
    <location>
        <begin position="1"/>
        <end position="672"/>
    </location>
</feature>
<evidence type="ECO:0000250" key="1"/>
<evidence type="ECO:0000305" key="2"/>
<name>AACS_XENTR</name>
<accession>Q28BL6</accession>